<dbReference type="EMBL" id="V01408">
    <property type="status" value="NOT_ANNOTATED_CDS"/>
    <property type="molecule type" value="Unassigned_RNA"/>
</dbReference>
<dbReference type="EMBL" id="V01409">
    <property type="status" value="NOT_ANNOTATED_CDS"/>
    <property type="molecule type" value="Genomic_RNA"/>
</dbReference>
<dbReference type="EMBL" id="V01406">
    <property type="protein sequence ID" value="CAA24685.1"/>
    <property type="molecule type" value="Genomic_RNA"/>
</dbReference>
<dbReference type="EMBL" id="X70882">
    <property type="protein sequence ID" value="CAA50227.1"/>
    <property type="molecule type" value="mRNA"/>
</dbReference>
<dbReference type="EMBL" id="X70883">
    <property type="protein sequence ID" value="CAA50228.1"/>
    <property type="molecule type" value="mRNA"/>
</dbReference>
<dbReference type="EMBL" id="X70884">
    <property type="protein sequence ID" value="CAA50229.1"/>
    <property type="molecule type" value="mRNA"/>
</dbReference>
<dbReference type="RefSeq" id="NP_597750.1">
    <property type="nucleotide sequence ID" value="NC_001367.1"/>
</dbReference>
<dbReference type="PDB" id="1EI7">
    <property type="method" value="X-ray"/>
    <property type="resolution" value="2.45 A"/>
    <property type="chains" value="A/B=2-159"/>
</dbReference>
<dbReference type="PDB" id="2TMV">
    <property type="method" value="Fiber"/>
    <property type="resolution" value="2.90 A"/>
    <property type="chains" value="P=2-159"/>
</dbReference>
<dbReference type="PDB" id="3J06">
    <property type="method" value="EM"/>
    <property type="chains" value="A=1-159"/>
</dbReference>
<dbReference type="PDB" id="3KML">
    <property type="method" value="X-ray"/>
    <property type="resolution" value="3.01 A"/>
    <property type="chains" value="A/B/C/D/E/F/G/H/I/J/K/L/M/N/O/P/Q=2-100"/>
</dbReference>
<dbReference type="PDB" id="4GQH">
    <property type="method" value="X-ray"/>
    <property type="resolution" value="3.06 A"/>
    <property type="chains" value="A/B/C/D/E/F/G/H/I/J/K/L/M/N/O/P/Q/R/S/T/U/V/W/X/Y/Z/a/b/c/d/e/f/h/i=2-155"/>
</dbReference>
<dbReference type="PDB" id="4UDV">
    <property type="method" value="EM"/>
    <property type="resolution" value="3.35 A"/>
    <property type="chains" value="A=2-159"/>
</dbReference>
<dbReference type="PDB" id="6I5A">
    <property type="method" value="EM"/>
    <property type="resolution" value="2.30 A"/>
    <property type="chains" value="A=1-159"/>
</dbReference>
<dbReference type="PDB" id="6R7M">
    <property type="method" value="EM"/>
    <property type="resolution" value="1.92 A"/>
    <property type="chains" value="A=2-154"/>
</dbReference>
<dbReference type="PDB" id="6RLP">
    <property type="method" value="EM"/>
    <property type="resolution" value="2.30 A"/>
    <property type="chains" value="A/B/C/D/E/F/G/H/I/J/K/L/M/N/O/P/Q/S/T/U/V/W/X/Y=2-154"/>
</dbReference>
<dbReference type="PDB" id="6SAE">
    <property type="method" value="EM"/>
    <property type="resolution" value="1.90 A"/>
    <property type="chains" value="A=2-159"/>
</dbReference>
<dbReference type="PDB" id="6SAG">
    <property type="method" value="EM"/>
    <property type="resolution" value="2.00 A"/>
    <property type="chains" value="A=2-159"/>
</dbReference>
<dbReference type="PDB" id="6X0Q">
    <property type="method" value="X-ray"/>
    <property type="resolution" value="3.00 A"/>
    <property type="chains" value="A/B/C/D/E/F/G/H/I/J/K/L/M/N/O/P/Q=2-158"/>
</dbReference>
<dbReference type="PDB" id="6X0R">
    <property type="method" value="X-ray"/>
    <property type="resolution" value="3.00 A"/>
    <property type="chains" value="A/B/C/D/E/F/G/H/I/J/K/L/M/N/O/P/Q=2-158"/>
</dbReference>
<dbReference type="PDB" id="7Q22">
    <property type="method" value="EM"/>
    <property type="resolution" value="6.30 A"/>
    <property type="chains" value="A=2-154"/>
</dbReference>
<dbReference type="PDB" id="7Q23">
    <property type="method" value="EM"/>
    <property type="resolution" value="4.30 A"/>
    <property type="chains" value="A=2-154"/>
</dbReference>
<dbReference type="PDB" id="7Q2Q">
    <property type="method" value="EM"/>
    <property type="resolution" value="4.30 A"/>
    <property type="chains" value="A=2-154"/>
</dbReference>
<dbReference type="PDB" id="7Q2R">
    <property type="method" value="EM"/>
    <property type="resolution" value="3.50 A"/>
    <property type="chains" value="A=2-154"/>
</dbReference>
<dbReference type="PDB" id="7Q2S">
    <property type="method" value="EM"/>
    <property type="resolution" value="3.70 A"/>
    <property type="chains" value="A=2-154"/>
</dbReference>
<dbReference type="PDB" id="8EAW">
    <property type="method" value="X-ray"/>
    <property type="resolution" value="2.80 A"/>
    <property type="chains" value="a/b/c/d/e/f/g/h/i/j/k/l/m/n/o/p/q=2-159"/>
</dbReference>
<dbReference type="PDBsum" id="1EI7"/>
<dbReference type="PDBsum" id="2TMV"/>
<dbReference type="PDBsum" id="3J06"/>
<dbReference type="PDBsum" id="3KML"/>
<dbReference type="PDBsum" id="4GQH"/>
<dbReference type="PDBsum" id="4UDV"/>
<dbReference type="PDBsum" id="6I5A"/>
<dbReference type="PDBsum" id="6R7M"/>
<dbReference type="PDBsum" id="6RLP"/>
<dbReference type="PDBsum" id="6SAE"/>
<dbReference type="PDBsum" id="6SAG"/>
<dbReference type="PDBsum" id="6X0Q"/>
<dbReference type="PDBsum" id="6X0R"/>
<dbReference type="PDBsum" id="7Q22"/>
<dbReference type="PDBsum" id="7Q23"/>
<dbReference type="PDBsum" id="7Q2Q"/>
<dbReference type="PDBsum" id="7Q2R"/>
<dbReference type="PDBsum" id="7Q2S"/>
<dbReference type="PDBsum" id="8EAW"/>
<dbReference type="EMDB" id="EMD-10129"/>
<dbReference type="EMDB" id="EMD-10130"/>
<dbReference type="EMDB" id="EMD-13778"/>
<dbReference type="EMDB" id="EMD-13779"/>
<dbReference type="EMDB" id="EMD-13780"/>
<dbReference type="EMDB" id="EMD-13781"/>
<dbReference type="EMDB" id="EMD-13782"/>
<dbReference type="EMDB" id="EMD-4413"/>
<dbReference type="EMDB" id="EMD-5185"/>
<dbReference type="SMR" id="P69687"/>
<dbReference type="DIP" id="DIP-59677N"/>
<dbReference type="iPTMnet" id="P69687"/>
<dbReference type="ABCD" id="P69687">
    <property type="antibodies" value="6 sequenced antibodies"/>
</dbReference>
<dbReference type="KEGG" id="vg:1494080"/>
<dbReference type="EvolutionaryTrace" id="P69687"/>
<dbReference type="Proteomes" id="UP000000522">
    <property type="component" value="Segment"/>
</dbReference>
<dbReference type="GO" id="GO:0019029">
    <property type="term" value="C:helical viral capsid"/>
    <property type="evidence" value="ECO:0007669"/>
    <property type="project" value="UniProtKB-KW"/>
</dbReference>
<dbReference type="GO" id="GO:0042802">
    <property type="term" value="F:identical protein binding"/>
    <property type="evidence" value="ECO:0000353"/>
    <property type="project" value="IntAct"/>
</dbReference>
<dbReference type="GO" id="GO:0005198">
    <property type="term" value="F:structural molecule activity"/>
    <property type="evidence" value="ECO:0007669"/>
    <property type="project" value="InterPro"/>
</dbReference>
<dbReference type="Gene3D" id="1.20.120.70">
    <property type="entry name" value="Tobacco mosaic virus-like, coat protein"/>
    <property type="match status" value="1"/>
</dbReference>
<dbReference type="InterPro" id="IPR001337">
    <property type="entry name" value="TMV-like_coat"/>
</dbReference>
<dbReference type="InterPro" id="IPR036417">
    <property type="entry name" value="TMV-like_coat_sf"/>
</dbReference>
<dbReference type="Pfam" id="PF00721">
    <property type="entry name" value="TMV_coat"/>
    <property type="match status" value="1"/>
</dbReference>
<dbReference type="SUPFAM" id="SSF47195">
    <property type="entry name" value="TMV-like viral coat proteins"/>
    <property type="match status" value="1"/>
</dbReference>
<proteinExistence type="evidence at protein level"/>
<organismHost>
    <name type="scientific">Nicotiana tabacum</name>
    <name type="common">Common tobacco</name>
    <dbReference type="NCBI Taxonomy" id="4097"/>
</organismHost>
<sequence>MSYSITTPSQFVFLSSAWADPIELINLCTNALGNQFQTQQARTVVQRQFSEVWKPSPQVTVRFPDSDFKVYRYNAVLDPLVTALLGAFDTRNRIIEVENQANPTTAETLDATRRVDDATVAIRSAINNLIVELIRGTGSYNRSSFESSSGLVWTSGPAT</sequence>
<name>CAPSD_TMV</name>
<accession>P69687</accession>
<accession>P03570</accession>
<comment type="function">
    <text>Capsid protein self-assembles to form rod-shaped virions about 18 nm in diameter with a central canal enclosing the viral genomic RNA.</text>
</comment>
<comment type="interaction">
    <interactant intactId="EBI-15927445">
        <id>P69687</id>
    </interactant>
    <interactant intactId="EBI-15927445">
        <id>P69687</id>
        <label>CP</label>
    </interactant>
    <organismsDiffer>false</organismsDiffer>
    <experiments>2</experiments>
</comment>
<comment type="subcellular location">
    <subcellularLocation>
        <location evidence="4">Virion</location>
    </subcellularLocation>
</comment>
<comment type="similarity">
    <text evidence="4">Belongs to the virgaviridae capsid protein family.</text>
</comment>
<reference key="1">
    <citation type="journal article" date="1982" name="Proc. Natl. Acad. Sci. U.S.A.">
        <title>Nucleotide sequence of tobacco mosaic virus RNA.</title>
        <authorList>
            <person name="Goelet P."/>
            <person name="Lomonossoff G.P."/>
            <person name="Butler P.J.G."/>
            <person name="Akam M.E."/>
            <person name="Gait M.J."/>
            <person name="Karn J."/>
        </authorList>
    </citation>
    <scope>NUCLEOTIDE SEQUENCE [GENOMIC RNA]</scope>
</reference>
<reference key="2">
    <citation type="journal article" date="1979" name="Nucleic Acids Res.">
        <title>Sequence of 1000 nucleotides at the 3' end of tobacco mosaic virus RNA.</title>
        <authorList>
            <person name="Guilley H."/>
            <person name="Jonard G."/>
            <person name="Kukla B."/>
            <person name="Richards K.E."/>
        </authorList>
    </citation>
    <scope>NUCLEOTIDE SEQUENCE [GENOMIC RNA]</scope>
</reference>
<reference key="3">
    <citation type="journal article" date="1960" name="Proc. Natl. Acad. Sci. U.S.A.">
        <title>The complete amino acid sequence of the protein of tobacco mosaic virus.</title>
        <authorList>
            <person name="Tsugita A."/>
            <person name="Gish D.T."/>
            <person name="Young J."/>
            <person name="Fraenkel-Conrat H."/>
            <person name="Knight C.A."/>
            <person name="Stanley W.M."/>
        </authorList>
    </citation>
    <scope>PRELIMINARY PROTEIN SEQUENCE OF 2-159</scope>
    <scope>ACETYLATION AT SER-2</scope>
</reference>
<reference key="4">
    <citation type="journal article" date="1964" name="Arch. Biochem. Biophys.">
        <title>Studies on the amino acid sequence of tobacco mosaic virus protein. V. Amino acid sequences of two peptides from tryptic digests and location of amide group.</title>
        <authorList>
            <person name="Funatsu G."/>
            <person name="Tsugita A."/>
            <person name="Fraenkel-Conrat H."/>
        </authorList>
    </citation>
    <scope>PROTEIN SEQUENCE OF 2-42 AND 94-113</scope>
    <scope>SEQUENCE REVISION</scope>
</reference>
<reference key="5">
    <citation type="journal article" date="1962" name="Z. Naturforsch. B">
        <title>The sequence of amino acids in the protein of tobacco mosaic virus. IV. Separation of tobacco mosaic virus protein with trypsin.</title>
        <authorList>
            <person name="Anderer F.A."/>
            <person name="Handschuh D."/>
        </authorList>
    </citation>
    <scope>PROTEIN SEQUENCE OF 2-159</scope>
</reference>
<reference key="6">
    <citation type="journal article" date="1965" name="Z. Naturforsch. B">
        <title>Further studies on amino acid sequence of proteins in tobacco mosaic virus.</title>
        <authorList>
            <person name="Anderer F.A."/>
            <person name="Wittmann-Liebold B."/>
            <person name="Wittmann H.G."/>
        </authorList>
    </citation>
    <scope>SEQUENCE REVISION</scope>
</reference>
<reference key="7">
    <citation type="journal article" date="1970" name="J. Biochem.">
        <title>Amino acid sequences of some common Japanese strains of tobacco mosaic virus.</title>
        <authorList>
            <person name="Nozu Y."/>
            <person name="Ohno T."/>
            <person name="Okada Y."/>
        </authorList>
    </citation>
    <scope>SEQUENCE REVISION</scope>
</reference>
<reference key="8">
    <citation type="journal article" date="1993" name="Nucleic Acids Res.">
        <title>Capsid protein gene sequences of four tobacco mosaic virus strains defective for virus assembly.</title>
        <authorList>
            <person name="Kuhlmann U."/>
            <person name="Sarkar S."/>
            <person name="Rohde W."/>
        </authorList>
    </citation>
    <scope>MUTANTS DEFECTIVE CAPSID PM2; DT1 AND DT2</scope>
</reference>
<reference key="9">
    <citation type="journal article" date="1986" name="Science">
        <title>Structure of tobacco mosaic virus at 3.6-A resolution: implications for assembly.</title>
        <authorList>
            <person name="Namba K."/>
            <person name="Stubbs G."/>
        </authorList>
    </citation>
    <scope>X-RAY CRYSTALLOGRAPHY (3.6 ANGSTROMS) OF 1-159</scope>
</reference>
<organism>
    <name type="scientific">Tobacco mosaic virus (strain vulgare)</name>
    <name type="common">TMV</name>
    <name type="synonym">Tobacco mosaic virus (strain U1)</name>
    <dbReference type="NCBI Taxonomy" id="12243"/>
    <lineage>
        <taxon>Viruses</taxon>
        <taxon>Riboviria</taxon>
        <taxon>Orthornavirae</taxon>
        <taxon>Kitrinoviricota</taxon>
        <taxon>Alsuviricetes</taxon>
        <taxon>Martellivirales</taxon>
        <taxon>Virgaviridae</taxon>
        <taxon>Tobamovirus</taxon>
        <taxon>Tobacco mosaic virus</taxon>
    </lineage>
</organism>
<feature type="initiator methionine" description="Removed; by host" evidence="1 3">
    <location>
        <position position="1"/>
    </location>
</feature>
<feature type="chain" id="PRO_0000144918" description="Capsid protein">
    <location>
        <begin position="2"/>
        <end position="159"/>
    </location>
</feature>
<feature type="modified residue" description="N-acetylserine; by host" evidence="2">
    <location>
        <position position="2"/>
    </location>
</feature>
<feature type="sequence variant" description="In PM2; DT1 and DT2.">
    <original>T</original>
    <variation>I</variation>
    <location>
        <position position="29"/>
    </location>
</feature>
<feature type="sequence variant" description="In DT2.">
    <original>P</original>
    <variation>S</variation>
    <location>
        <position position="79"/>
    </location>
</feature>
<feature type="sequence variant" description="In PM2; DT1 and DT2.">
    <original>E</original>
    <variation>D</variation>
    <location>
        <position position="96"/>
    </location>
</feature>
<feature type="sequence variant" description="In PM2.">
    <original>T</original>
    <variation>M</variation>
    <location>
        <position position="104"/>
    </location>
</feature>
<feature type="sequence variant" description="In DT1 and DT2.">
    <original>G</original>
    <variation>R</variation>
    <location>
        <position position="138"/>
    </location>
</feature>
<feature type="sequence variant" description="In DT2.">
    <original>S</original>
    <variation>Y</variation>
    <location>
        <position position="149"/>
    </location>
</feature>
<feature type="strand" evidence="9">
    <location>
        <begin position="2"/>
        <end position="4"/>
    </location>
</feature>
<feature type="helix" evidence="8">
    <location>
        <begin position="8"/>
        <end position="14"/>
    </location>
</feature>
<feature type="helix" evidence="8">
    <location>
        <begin position="21"/>
        <end position="31"/>
    </location>
</feature>
<feature type="strand" evidence="5">
    <location>
        <begin position="32"/>
        <end position="34"/>
    </location>
</feature>
<feature type="strand" evidence="5">
    <location>
        <begin position="36"/>
        <end position="38"/>
    </location>
</feature>
<feature type="helix" evidence="8">
    <location>
        <begin position="39"/>
        <end position="51"/>
    </location>
</feature>
<feature type="strand" evidence="7">
    <location>
        <begin position="59"/>
        <end position="61"/>
    </location>
</feature>
<feature type="strand" evidence="8">
    <location>
        <begin position="69"/>
        <end position="71"/>
    </location>
</feature>
<feature type="helix" evidence="8">
    <location>
        <begin position="77"/>
        <end position="87"/>
    </location>
</feature>
<feature type="helix" evidence="8">
    <location>
        <begin position="93"/>
        <end position="97"/>
    </location>
</feature>
<feature type="strand" evidence="7">
    <location>
        <begin position="99"/>
        <end position="101"/>
    </location>
</feature>
<feature type="helix" evidence="8">
    <location>
        <begin position="105"/>
        <end position="134"/>
    </location>
</feature>
<feature type="turn" evidence="8">
    <location>
        <begin position="135"/>
        <end position="138"/>
    </location>
</feature>
<feature type="helix" evidence="8">
    <location>
        <begin position="142"/>
        <end position="148"/>
    </location>
</feature>
<feature type="strand" evidence="6">
    <location>
        <begin position="152"/>
        <end position="154"/>
    </location>
</feature>
<evidence type="ECO:0000269" key="1">
    <source>
    </source>
</evidence>
<evidence type="ECO:0000269" key="2">
    <source>
    </source>
</evidence>
<evidence type="ECO:0000269" key="3">
    <source ref="5"/>
</evidence>
<evidence type="ECO:0000305" key="4"/>
<evidence type="ECO:0007829" key="5">
    <source>
        <dbReference type="PDB" id="3J06"/>
    </source>
</evidence>
<evidence type="ECO:0007829" key="6">
    <source>
        <dbReference type="PDB" id="4GQH"/>
    </source>
</evidence>
<evidence type="ECO:0007829" key="7">
    <source>
        <dbReference type="PDB" id="6R7M"/>
    </source>
</evidence>
<evidence type="ECO:0007829" key="8">
    <source>
        <dbReference type="PDB" id="6SAE"/>
    </source>
</evidence>
<evidence type="ECO:0007829" key="9">
    <source>
        <dbReference type="PDB" id="6X0Q"/>
    </source>
</evidence>
<keyword id="KW-0002">3D-structure</keyword>
<keyword id="KW-0007">Acetylation</keyword>
<keyword id="KW-0167">Capsid protein</keyword>
<keyword id="KW-0903">Direct protein sequencing</keyword>
<keyword id="KW-1139">Helical capsid protein</keyword>
<keyword id="KW-1185">Reference proteome</keyword>
<keyword id="KW-0946">Virion</keyword>
<protein>
    <recommendedName>
        <fullName>Capsid protein</fullName>
    </recommendedName>
    <alternativeName>
        <fullName>Coat protein</fullName>
    </alternativeName>
</protein>
<gene>
    <name type="primary">CP</name>
</gene>